<name>WOX8_ARATH</name>
<proteinExistence type="evidence at transcript level"/>
<comment type="function">
    <text evidence="3 7 8">Probable transcription factor, which may be involved in embryonic patterning (PubMed:14711878). May be required for basal embryo development after fertilization (PubMed:14711878). Acts partially redundantly with STIP in promoting embryonic cell division and proliferation (PubMed:17706632). Promotes cotyledon boundary formation by maintaining the symmetry in CUC genes expression domains (PubMed:22827849).</text>
</comment>
<comment type="subcellular location">
    <subcellularLocation>
        <location evidence="1">Nucleus</location>
    </subcellularLocation>
</comment>
<comment type="tissue specificity">
    <text evidence="4 5 6 7">Expressed only in the egg cell (PubMed:21316593). Not detected in the pollen tube (PubMed:21316593). Expressed in the zygote, the basal cell, and later the suspensor (PubMed:21802295). Expressed in all suspensor cells, except the hypophysis, and in the embryo surrounding region (ESR) endosperm cells (PubMed:22427333). Strongly expressed in the suspensor cells, with a weak expression also detected throughout the developing embryo (PubMed:22827849).</text>
</comment>
<comment type="developmental stage">
    <text evidence="2 4">Detected in the egg cell and the central cell of the embryo sac (PubMed:14711878). After fertilization, it is expressed in the zygote (PubMed:14711878). After the first division of the zygote, it is detected exclusively in the basal daughter cell, while WOX2 is expressed in the apical daughter cell (PubMed:14711878). Through the 16-cell stage, it is expressed in all descendants of the basal daughter, the developing suspensor and the hypophyseal cell (PubMed:14711878). After the hypophysis had divided, expression stops in descendants, but remains present in the extra embryonic suspensor (PubMed:14711878). Moreover it is found in the cellularized endosperm of the micropylar region during the globular and heart stages of embryogenesis (PubMed:14711878). Not expressed later in embryogenesis or in postembryonic stages (PubMed:14711878). Activated in the zygote after fertilization (PubMed:21316593).</text>
</comment>
<comment type="induction">
    <text evidence="4 6">Up-regulated in the zygote after fertilization by the transcription factor WRKY2 (PubMed:21316593). Up-regulated by CLE8 (PubMed:22427333).</text>
</comment>
<comment type="disruption phenotype">
    <text evidence="3">No visible phenotype, due to the redundancy with WOX9 (PubMed:17706632). Wox8 and wox9 double mutants are embryo lethal, with embryos disrupted as early as the first cell division in the embryo proper (PubMed:17706632).</text>
</comment>
<comment type="similarity">
    <text evidence="10">Belongs to the WUS homeobox family.</text>
</comment>
<comment type="sequence caution" evidence="10">
    <conflict type="erroneous gene model prediction">
        <sequence resource="EMBL-CDS" id="BAB08243"/>
    </conflict>
</comment>
<organism>
    <name type="scientific">Arabidopsis thaliana</name>
    <name type="common">Mouse-ear cress</name>
    <dbReference type="NCBI Taxonomy" id="3702"/>
    <lineage>
        <taxon>Eukaryota</taxon>
        <taxon>Viridiplantae</taxon>
        <taxon>Streptophyta</taxon>
        <taxon>Embryophyta</taxon>
        <taxon>Tracheophyta</taxon>
        <taxon>Spermatophyta</taxon>
        <taxon>Magnoliopsida</taxon>
        <taxon>eudicotyledons</taxon>
        <taxon>Gunneridae</taxon>
        <taxon>Pentapetalae</taxon>
        <taxon>rosids</taxon>
        <taxon>malvids</taxon>
        <taxon>Brassicales</taxon>
        <taxon>Brassicaceae</taxon>
        <taxon>Camelineae</taxon>
        <taxon>Arabidopsis</taxon>
    </lineage>
</organism>
<reference key="1">
    <citation type="journal article" date="2004" name="Development">
        <title>Expression dynamics of WOX genes mark cell fate decisions during early embryonic patterning in Arabidopsis thaliana.</title>
        <authorList>
            <person name="Haecker A."/>
            <person name="Gross-Hardt R."/>
            <person name="Geiges B."/>
            <person name="Sarkar A."/>
            <person name="Breuninger H."/>
            <person name="Herrmann M."/>
            <person name="Laux T."/>
        </authorList>
    </citation>
    <scope>NUCLEOTIDE SEQUENCE [MRNA]</scope>
    <scope>POSSIBLE FUNCTION</scope>
    <scope>DEVELOPMENTAL STAGE</scope>
    <source>
        <strain>cv. Landsberg erecta</strain>
    </source>
</reference>
<reference key="2">
    <citation type="journal article" date="1997" name="DNA Res.">
        <title>Structural analysis of Arabidopsis thaliana chromosome 5. II. Sequence features of the regions of 1,044,062 bp covered by thirteen physically assigned P1 clones.</title>
        <authorList>
            <person name="Kotani H."/>
            <person name="Nakamura Y."/>
            <person name="Sato S."/>
            <person name="Kaneko T."/>
            <person name="Asamizu E."/>
            <person name="Miyajima N."/>
            <person name="Tabata S."/>
        </authorList>
    </citation>
    <scope>NUCLEOTIDE SEQUENCE [LARGE SCALE GENOMIC DNA]</scope>
    <source>
        <strain>cv. Columbia</strain>
    </source>
</reference>
<reference key="3">
    <citation type="journal article" date="2017" name="Plant J.">
        <title>Araport11: a complete reannotation of the Arabidopsis thaliana reference genome.</title>
        <authorList>
            <person name="Cheng C.Y."/>
            <person name="Krishnakumar V."/>
            <person name="Chan A.P."/>
            <person name="Thibaud-Nissen F."/>
            <person name="Schobel S."/>
            <person name="Town C.D."/>
        </authorList>
    </citation>
    <scope>GENOME REANNOTATION</scope>
    <source>
        <strain>cv. Columbia</strain>
    </source>
</reference>
<reference key="4">
    <citation type="journal article" date="2007" name="Dev. Biol.">
        <title>Combinations of WOX activities regulate tissue proliferation during Arabidopsis embryonic development.</title>
        <authorList>
            <person name="Wu X."/>
            <person name="Chory J."/>
            <person name="Weigel D."/>
        </authorList>
    </citation>
    <scope>FUNCTION</scope>
    <scope>DISRUPTION PHENOTYPE</scope>
</reference>
<reference key="5">
    <citation type="journal article" date="2011" name="Curr. Biol.">
        <title>The RWP-RK factor GROUNDED promotes embryonic polarity by facilitating YODA MAP kinase signaling.</title>
        <authorList>
            <person name="Jeong S."/>
            <person name="Palmer T.M."/>
            <person name="Lukowitz W."/>
        </authorList>
    </citation>
    <scope>TISSUE SPECIFICITY</scope>
</reference>
<reference key="6">
    <citation type="journal article" date="2011" name="Dev. Cell">
        <title>Transcriptional activation of Arabidopsis axis patterning genes WOX8/9 links zygote polarity to embryo development.</title>
        <authorList>
            <person name="Ueda M."/>
            <person name="Zhang Z."/>
            <person name="Laux T."/>
        </authorList>
    </citation>
    <scope>TISSUE SPECIFICITY</scope>
    <scope>DEVELOPMENTAL STAGE</scope>
    <scope>INDUCTION BY WRKY2</scope>
</reference>
<reference key="7">
    <citation type="journal article" date="2012" name="Plant Cell">
        <title>Regulation of Arabidopsis embryo and endosperm development by the polypeptide signaling molecule CLE8.</title>
        <authorList>
            <person name="Fiume E."/>
            <person name="Fletcher J.C."/>
        </authorList>
    </citation>
    <scope>INDUCTION BY CLE8</scope>
    <scope>TISSUE SPECIFICITY</scope>
</reference>
<reference key="8">
    <citation type="journal article" date="2012" name="Plant J.">
        <title>WOX2 and STIMPY-LIKE/WOX8 promote cotyledon boundary formation in Arabidopsis.</title>
        <authorList>
            <person name="Lie C."/>
            <person name="Kelsom C."/>
            <person name="Wu X."/>
        </authorList>
    </citation>
    <scope>FUNCTION</scope>
    <scope>TISSUE SPECIFICITY</scope>
</reference>
<protein>
    <recommendedName>
        <fullName evidence="8">WUSCHEL-related homeobox 8</fullName>
    </recommendedName>
    <alternativeName>
        <fullName evidence="9">Protein STIMPY-LIKE</fullName>
    </alternativeName>
</protein>
<feature type="chain" id="PRO_0000049375" description="WUSCHEL-related homeobox 8">
    <location>
        <begin position="1"/>
        <end position="325"/>
    </location>
</feature>
<feature type="DNA-binding region" description="Homeobox; WUS-type" evidence="1">
    <location>
        <begin position="51"/>
        <end position="115"/>
    </location>
</feature>
<keyword id="KW-0217">Developmental protein</keyword>
<keyword id="KW-0238">DNA-binding</keyword>
<keyword id="KW-0371">Homeobox</keyword>
<keyword id="KW-0539">Nucleus</keyword>
<keyword id="KW-1185">Reference proteome</keyword>
<keyword id="KW-0804">Transcription</keyword>
<keyword id="KW-0805">Transcription regulation</keyword>
<dbReference type="EMBL" id="AY251400">
    <property type="protein sequence ID" value="AAP37138.1"/>
    <property type="molecule type" value="mRNA"/>
</dbReference>
<dbReference type="EMBL" id="AB006698">
    <property type="protein sequence ID" value="BAB08243.1"/>
    <property type="status" value="ALT_SEQ"/>
    <property type="molecule type" value="Genomic_DNA"/>
</dbReference>
<dbReference type="EMBL" id="CP002688">
    <property type="protein sequence ID" value="AED95323.1"/>
    <property type="molecule type" value="Genomic_DNA"/>
</dbReference>
<dbReference type="RefSeq" id="NP_199410.2">
    <property type="nucleotide sequence ID" value="NM_123966.3"/>
</dbReference>
<dbReference type="SMR" id="Q6X7J5"/>
<dbReference type="FunCoup" id="Q6X7J5">
    <property type="interactions" value="5"/>
</dbReference>
<dbReference type="IntAct" id="Q6X7J5">
    <property type="interactions" value="1"/>
</dbReference>
<dbReference type="STRING" id="3702.Q6X7J5"/>
<dbReference type="PaxDb" id="3702-AT5G45980.1"/>
<dbReference type="EnsemblPlants" id="AT5G45980.1">
    <property type="protein sequence ID" value="AT5G45980.1"/>
    <property type="gene ID" value="AT5G45980"/>
</dbReference>
<dbReference type="GeneID" id="834638"/>
<dbReference type="Gramene" id="AT5G45980.1">
    <property type="protein sequence ID" value="AT5G45980.1"/>
    <property type="gene ID" value="AT5G45980"/>
</dbReference>
<dbReference type="KEGG" id="ath:AT5G45980"/>
<dbReference type="Araport" id="AT5G45980"/>
<dbReference type="TAIR" id="AT5G45980">
    <property type="gene designation" value="WOX8"/>
</dbReference>
<dbReference type="eggNOG" id="ENOG502QVSY">
    <property type="taxonomic scope" value="Eukaryota"/>
</dbReference>
<dbReference type="HOGENOM" id="CLU_030463_0_0_1"/>
<dbReference type="InParanoid" id="Q6X7J5"/>
<dbReference type="OMA" id="YMHYSNC"/>
<dbReference type="PhylomeDB" id="Q6X7J5"/>
<dbReference type="PRO" id="PR:Q6X7J5"/>
<dbReference type="Proteomes" id="UP000006548">
    <property type="component" value="Chromosome 5"/>
</dbReference>
<dbReference type="ExpressionAtlas" id="Q6X7J5">
    <property type="expression patterns" value="baseline and differential"/>
</dbReference>
<dbReference type="GO" id="GO:0005634">
    <property type="term" value="C:nucleus"/>
    <property type="evidence" value="ECO:0000314"/>
    <property type="project" value="TAIR"/>
</dbReference>
<dbReference type="GO" id="GO:0003677">
    <property type="term" value="F:DNA binding"/>
    <property type="evidence" value="ECO:0007669"/>
    <property type="project" value="UniProtKB-KW"/>
</dbReference>
<dbReference type="GO" id="GO:0003700">
    <property type="term" value="F:DNA-binding transcription factor activity"/>
    <property type="evidence" value="ECO:0000250"/>
    <property type="project" value="TAIR"/>
</dbReference>
<dbReference type="GO" id="GO:0090451">
    <property type="term" value="P:cotyledon boundary formation"/>
    <property type="evidence" value="ECO:0000316"/>
    <property type="project" value="TAIR"/>
</dbReference>
<dbReference type="GO" id="GO:0048825">
    <property type="term" value="P:cotyledon development"/>
    <property type="evidence" value="ECO:0000315"/>
    <property type="project" value="TAIR"/>
</dbReference>
<dbReference type="GO" id="GO:0009793">
    <property type="term" value="P:embryo development ending in seed dormancy"/>
    <property type="evidence" value="ECO:0000315"/>
    <property type="project" value="TAIR"/>
</dbReference>
<dbReference type="GO" id="GO:0030010">
    <property type="term" value="P:establishment of cell polarity"/>
    <property type="evidence" value="ECO:0000315"/>
    <property type="project" value="TAIR"/>
</dbReference>
<dbReference type="GO" id="GO:0008284">
    <property type="term" value="P:positive regulation of cell population proliferation"/>
    <property type="evidence" value="ECO:0000316"/>
    <property type="project" value="TAIR"/>
</dbReference>
<dbReference type="GO" id="GO:0050793">
    <property type="term" value="P:regulation of developmental process"/>
    <property type="evidence" value="ECO:0007669"/>
    <property type="project" value="InterPro"/>
</dbReference>
<dbReference type="CDD" id="cd00086">
    <property type="entry name" value="homeodomain"/>
    <property type="match status" value="1"/>
</dbReference>
<dbReference type="FunFam" id="1.10.10.60:FF:000118">
    <property type="entry name" value="WUSCHEL-related homeobox 11"/>
    <property type="match status" value="1"/>
</dbReference>
<dbReference type="Gene3D" id="1.10.10.60">
    <property type="entry name" value="Homeodomain-like"/>
    <property type="match status" value="1"/>
</dbReference>
<dbReference type="InterPro" id="IPR001356">
    <property type="entry name" value="HD"/>
</dbReference>
<dbReference type="InterPro" id="IPR009057">
    <property type="entry name" value="Homeodomain-like_sf"/>
</dbReference>
<dbReference type="InterPro" id="IPR044557">
    <property type="entry name" value="WOX8/9-like"/>
</dbReference>
<dbReference type="PANTHER" id="PTHR47288:SF3">
    <property type="entry name" value="WUSCHEL-RELATED HOMEOBOX 8"/>
    <property type="match status" value="1"/>
</dbReference>
<dbReference type="PANTHER" id="PTHR47288">
    <property type="entry name" value="WUSCHEL-RELATED HOMEOBOX 9"/>
    <property type="match status" value="1"/>
</dbReference>
<dbReference type="Pfam" id="PF00046">
    <property type="entry name" value="Homeodomain"/>
    <property type="match status" value="1"/>
</dbReference>
<dbReference type="SMART" id="SM00389">
    <property type="entry name" value="HOX"/>
    <property type="match status" value="1"/>
</dbReference>
<dbReference type="SUPFAM" id="SSF46689">
    <property type="entry name" value="Homeodomain-like"/>
    <property type="match status" value="1"/>
</dbReference>
<dbReference type="PROSITE" id="PS50071">
    <property type="entry name" value="HOMEOBOX_2"/>
    <property type="match status" value="1"/>
</dbReference>
<accession>Q6X7J5</accession>
<accession>Q9FNM4</accession>
<evidence type="ECO:0000255" key="1">
    <source>
        <dbReference type="PROSITE-ProRule" id="PRU00108"/>
    </source>
</evidence>
<evidence type="ECO:0000269" key="2">
    <source>
    </source>
</evidence>
<evidence type="ECO:0000269" key="3">
    <source>
    </source>
</evidence>
<evidence type="ECO:0000269" key="4">
    <source>
    </source>
</evidence>
<evidence type="ECO:0000269" key="5">
    <source>
    </source>
</evidence>
<evidence type="ECO:0000269" key="6">
    <source>
    </source>
</evidence>
<evidence type="ECO:0000269" key="7">
    <source>
    </source>
</evidence>
<evidence type="ECO:0000303" key="8">
    <source>
    </source>
</evidence>
<evidence type="ECO:0000303" key="9">
    <source>
    </source>
</evidence>
<evidence type="ECO:0000305" key="10"/>
<evidence type="ECO:0000312" key="11">
    <source>
        <dbReference type="Araport" id="AT5G45980"/>
    </source>
</evidence>
<evidence type="ECO:0000312" key="12">
    <source>
        <dbReference type="EMBL" id="BAB08243.1"/>
    </source>
</evidence>
<gene>
    <name evidence="8" type="primary">WOX8</name>
    <name evidence="9" type="synonym">STPL</name>
    <name evidence="11" type="ordered locus">At5g45980</name>
    <name evidence="12" type="ORF">K15I22.18</name>
</gene>
<sequence length="325" mass="36312">MSSSNKNWPSMFKSKPCNNNHHHQHEIDTPSYMHYSNCNLSSSFSSDRIPDPKPRWNPKPEQIRILESIFNSGTINPPREEIQRIRIRLQEYGQIGDANVFYWFQNRKSRAKHKLRVHHKSPKMSKKDKTVIPSTDADHCFGFVNQETGLYPVQNNELVVTEPAGFLFPVHNDPSAAQSAFGFGDFVVPVVTEEGMAFSTVNNGVNLETNENFDKIPAINLYGGDGNGGGNCFPPLTVPLTINQSQEKRDVGLSGGEDVGDNVYPVRMTVFINEMPIEVVSGLFNVKAAFGNDAVLINSFGQPILTDEFGVTYQPLQNGAIYYLI</sequence>